<name>RR7_CHLRE</name>
<proteinExistence type="evidence at protein level"/>
<reference key="1">
    <citation type="submission" date="2000-08" db="EMBL/GenBank/DDBJ databases">
        <title>The chloroplast rps7 gene in C. reinhardtii is not a split gene.</title>
        <authorList>
            <person name="Randolph-Anderson B.L."/>
            <person name="Boynton J.E."/>
            <person name="Gillham N.W."/>
        </authorList>
    </citation>
    <scope>NUCLEOTIDE SEQUENCE [GENOMIC DNA]</scope>
</reference>
<reference key="2">
    <citation type="journal article" date="2002" name="Plant Cell">
        <title>The Chlamydomonas reinhardtii plastid chromosome: islands of genes in a sea of repeats.</title>
        <authorList>
            <person name="Maul J.E."/>
            <person name="Lilly J.W."/>
            <person name="Cui L."/>
            <person name="dePamphilis C.W."/>
            <person name="Miller W."/>
            <person name="Harris E.H."/>
            <person name="Stern D.B."/>
        </authorList>
    </citation>
    <scope>NUCLEOTIDE SEQUENCE [LARGE SCALE GENOMIC DNA]</scope>
    <scope>IDENTIFICATION</scope>
    <scope>COMPLETE PLASTID GENOME</scope>
</reference>
<reference key="3">
    <citation type="journal article" date="2009" name="BMC Evol. Biol.">
        <title>Nucleotide diversity of the Chlamydomonas reinhardtii plastid genome: addressing the mutational-hazard hypothesis.</title>
        <authorList>
            <person name="Smith D.R."/>
            <person name="Lee R.W."/>
        </authorList>
    </citation>
    <scope>NUCLEOTIDE SEQUENCE [LARGE SCALE GENOMIC DNA]</scope>
    <source>
        <strain>CC-503</strain>
    </source>
</reference>
<reference key="4">
    <citation type="journal article" date="2002" name="Plant Cell">
        <title>Proteomic characterization of the small subunit of Chlamydomonas reinhardtii chloroplast ribosome: identification of a novel S1 domain-containing protein and unusually large orthologs of bacterial S2, S3, and S5.</title>
        <authorList>
            <person name="Yamaguchi K."/>
            <person name="Prieto S."/>
            <person name="Beligni M.V."/>
            <person name="Haynes P.A."/>
            <person name="McDonald W.H."/>
            <person name="Yates J.R. III"/>
            <person name="Mayfield S.P."/>
        </authorList>
    </citation>
    <scope>PROTEIN SEQUENCE OF 37-56; 57-64 AND 121-131</scope>
    <source>
        <strain>Arg7/cw15</strain>
    </source>
</reference>
<reference key="5">
    <citation type="journal article" date="1990" name="Mol. Gen. Genet.">
        <title>Cotranscription of the wild-type chloroplast atpE gene encoding the CF1/CF0 epsilon subunit with the 3' half of the rps7 gene in Chlamydomonas reinhardtii and characterization of frameshift mutations in atpE.</title>
        <authorList>
            <person name="Robertson D."/>
            <person name="Boynton J.E."/>
            <person name="Gillham N.W."/>
        </authorList>
    </citation>
    <scope>NUCLEOTIDE SEQUENCE [GENOMIC DNA] OF 117-168</scope>
</reference>
<accession>P48267</accession>
<accession>B7U1G6</accession>
<accession>Q8HUH3</accession>
<feature type="chain" id="PRO_0000124443" description="Small ribosomal subunit protein uS7c">
    <location>
        <begin position="1"/>
        <end position="168"/>
    </location>
</feature>
<organism>
    <name type="scientific">Chlamydomonas reinhardtii</name>
    <name type="common">Chlamydomonas smithii</name>
    <dbReference type="NCBI Taxonomy" id="3055"/>
    <lineage>
        <taxon>Eukaryota</taxon>
        <taxon>Viridiplantae</taxon>
        <taxon>Chlorophyta</taxon>
        <taxon>core chlorophytes</taxon>
        <taxon>Chlorophyceae</taxon>
        <taxon>CS clade</taxon>
        <taxon>Chlamydomonadales</taxon>
        <taxon>Chlamydomonadaceae</taxon>
        <taxon>Chlamydomonas</taxon>
    </lineage>
</organism>
<geneLocation type="chloroplast"/>
<evidence type="ECO:0000250" key="1"/>
<evidence type="ECO:0000305" key="2"/>
<dbReference type="EMBL" id="X53977">
    <property type="protein sequence ID" value="CAA37927.2"/>
    <property type="molecule type" value="Genomic_DNA"/>
</dbReference>
<dbReference type="EMBL" id="AF541865">
    <property type="protein sequence ID" value="AAN17818.1"/>
    <property type="molecule type" value="Genomic_DNA"/>
</dbReference>
<dbReference type="EMBL" id="FJ423446">
    <property type="protein sequence ID" value="ACJ50113.1"/>
    <property type="molecule type" value="Genomic_DNA"/>
</dbReference>
<dbReference type="EMBL" id="BK000554">
    <property type="protein sequence ID" value="DAA00925.1"/>
    <property type="molecule type" value="Genomic_DNA"/>
</dbReference>
<dbReference type="PIR" id="S11897">
    <property type="entry name" value="R3KM72"/>
</dbReference>
<dbReference type="RefSeq" id="NP_958380.1">
    <property type="nucleotide sequence ID" value="NC_005353.1"/>
</dbReference>
<dbReference type="SMR" id="P48267"/>
<dbReference type="FunCoup" id="P48267">
    <property type="interactions" value="1144"/>
</dbReference>
<dbReference type="STRING" id="3055.P48267"/>
<dbReference type="PaxDb" id="3055-DAA00925"/>
<dbReference type="GeneID" id="2716973"/>
<dbReference type="KEGG" id="cre:ChreCp024"/>
<dbReference type="eggNOG" id="KOG3291">
    <property type="taxonomic scope" value="Eukaryota"/>
</dbReference>
<dbReference type="HOGENOM" id="CLU_072226_1_1_1"/>
<dbReference type="InParanoid" id="P48267"/>
<dbReference type="Proteomes" id="UP000006906">
    <property type="component" value="Chloroplast"/>
</dbReference>
<dbReference type="GO" id="GO:0009507">
    <property type="term" value="C:chloroplast"/>
    <property type="evidence" value="ECO:0007669"/>
    <property type="project" value="UniProtKB-SubCell"/>
</dbReference>
<dbReference type="GO" id="GO:0005840">
    <property type="term" value="C:ribosome"/>
    <property type="evidence" value="ECO:0000318"/>
    <property type="project" value="GO_Central"/>
</dbReference>
<dbReference type="GO" id="GO:0015935">
    <property type="term" value="C:small ribosomal subunit"/>
    <property type="evidence" value="ECO:0007669"/>
    <property type="project" value="InterPro"/>
</dbReference>
<dbReference type="GO" id="GO:0003729">
    <property type="term" value="F:mRNA binding"/>
    <property type="evidence" value="ECO:0000318"/>
    <property type="project" value="GO_Central"/>
</dbReference>
<dbReference type="GO" id="GO:0019843">
    <property type="term" value="F:rRNA binding"/>
    <property type="evidence" value="ECO:0000318"/>
    <property type="project" value="GO_Central"/>
</dbReference>
<dbReference type="GO" id="GO:0003735">
    <property type="term" value="F:structural constituent of ribosome"/>
    <property type="evidence" value="ECO:0000318"/>
    <property type="project" value="GO_Central"/>
</dbReference>
<dbReference type="GO" id="GO:0000028">
    <property type="term" value="P:ribosomal small subunit assembly"/>
    <property type="evidence" value="ECO:0000318"/>
    <property type="project" value="GO_Central"/>
</dbReference>
<dbReference type="GO" id="GO:0006412">
    <property type="term" value="P:translation"/>
    <property type="evidence" value="ECO:0000318"/>
    <property type="project" value="GO_Central"/>
</dbReference>
<dbReference type="CDD" id="cd14871">
    <property type="entry name" value="uS7_Chloroplast"/>
    <property type="match status" value="1"/>
</dbReference>
<dbReference type="FunFam" id="1.10.455.10:FF:000001">
    <property type="entry name" value="30S ribosomal protein S7"/>
    <property type="match status" value="1"/>
</dbReference>
<dbReference type="Gene3D" id="1.10.455.10">
    <property type="entry name" value="Ribosomal protein S7 domain"/>
    <property type="match status" value="1"/>
</dbReference>
<dbReference type="HAMAP" id="MF_00480_B">
    <property type="entry name" value="Ribosomal_uS7_B"/>
    <property type="match status" value="1"/>
</dbReference>
<dbReference type="InterPro" id="IPR000235">
    <property type="entry name" value="Ribosomal_uS7"/>
</dbReference>
<dbReference type="InterPro" id="IPR005717">
    <property type="entry name" value="Ribosomal_uS7_bac/org-type"/>
</dbReference>
<dbReference type="InterPro" id="IPR023798">
    <property type="entry name" value="Ribosomal_uS7_dom"/>
</dbReference>
<dbReference type="InterPro" id="IPR036823">
    <property type="entry name" value="Ribosomal_uS7_dom_sf"/>
</dbReference>
<dbReference type="NCBIfam" id="TIGR01029">
    <property type="entry name" value="rpsG_bact"/>
    <property type="match status" value="1"/>
</dbReference>
<dbReference type="PANTHER" id="PTHR11205">
    <property type="entry name" value="RIBOSOMAL PROTEIN S7"/>
    <property type="match status" value="1"/>
</dbReference>
<dbReference type="Pfam" id="PF00177">
    <property type="entry name" value="Ribosomal_S7"/>
    <property type="match status" value="1"/>
</dbReference>
<dbReference type="PIRSF" id="PIRSF002122">
    <property type="entry name" value="RPS7p_RPS7a_RPS5e_RPS7o"/>
    <property type="match status" value="1"/>
</dbReference>
<dbReference type="SUPFAM" id="SSF47973">
    <property type="entry name" value="Ribosomal protein S7"/>
    <property type="match status" value="1"/>
</dbReference>
<gene>
    <name type="primary">rps7</name>
</gene>
<comment type="function">
    <text evidence="1">One of the primary rRNA binding proteins, it binds directly to 16S rRNA where it nucleates assembly of the head domain of the 30S subunit.</text>
</comment>
<comment type="subunit">
    <text>Part of the 30S ribosomal subunit.</text>
</comment>
<comment type="subcellular location">
    <subcellularLocation>
        <location>Plastid</location>
        <location>Chloroplast</location>
    </subcellularLocation>
</comment>
<comment type="similarity">
    <text evidence="2">Belongs to the universal ribosomal protein uS7 family.</text>
</comment>
<keyword id="KW-0150">Chloroplast</keyword>
<keyword id="KW-0903">Direct protein sequencing</keyword>
<keyword id="KW-0934">Plastid</keyword>
<keyword id="KW-1185">Reference proteome</keyword>
<keyword id="KW-0687">Ribonucleoprotein</keyword>
<keyword id="KW-0689">Ribosomal protein</keyword>
<keyword id="KW-0694">RNA-binding</keyword>
<keyword id="KW-0699">rRNA-binding</keyword>
<protein>
    <recommendedName>
        <fullName evidence="2">Small ribosomal subunit protein uS7c</fullName>
    </recommendedName>
    <alternativeName>
        <fullName>30S ribosomal protein S7, chloroplastic</fullName>
    </alternativeName>
</protein>
<sequence length="168" mass="19127">MPRRPINKKRTLLPDPVYNSVSVHMLVNRVLKSGKKSVAYRIVYNALKEIGDVTQKNPVEVFEKALDNVTPRVEVKPRRRAGAIQMVPRVLRLGDRARANSLRWIMEACDKRSGQPMVTKLKSEILDAYKKTGFAIRKKEELHKIAIANAMYAKKPQVIINAINLLVD</sequence>